<comment type="function">
    <text evidence="1">Required for the assembly of the rivet at the earliest stage of flagellar biosynthesis.</text>
</comment>
<comment type="subcellular location">
    <subcellularLocation>
        <location evidence="1">Cell inner membrane</location>
        <topology evidence="1">Multi-pass membrane protein</topology>
    </subcellularLocation>
    <subcellularLocation>
        <location evidence="1">Bacterial flagellum basal body</location>
    </subcellularLocation>
</comment>
<comment type="similarity">
    <text evidence="3">Belongs to the FliQ/MopD/SpaQ family.</text>
</comment>
<keyword id="KW-0975">Bacterial flagellum</keyword>
<keyword id="KW-0997">Cell inner membrane</keyword>
<keyword id="KW-1003">Cell membrane</keyword>
<keyword id="KW-0472">Membrane</keyword>
<keyword id="KW-1185">Reference proteome</keyword>
<keyword id="KW-0812">Transmembrane</keyword>
<keyword id="KW-1133">Transmembrane helix</keyword>
<name>FLIQ_ECOL6</name>
<proteinExistence type="inferred from homology"/>
<sequence length="89" mass="9632">MTPESVMMMGTEAMKVALALAAPLLLVALVTGLIISILQAATQINEMTLSFIPKIIAVFIAIIIAGPWMLNLLLDYVRTLFTNLPYIIG</sequence>
<feature type="chain" id="PRO_0000129095" description="Flagellar biosynthetic protein FliQ">
    <location>
        <begin position="1"/>
        <end position="89"/>
    </location>
</feature>
<feature type="transmembrane region" description="Helical" evidence="2">
    <location>
        <begin position="16"/>
        <end position="40"/>
    </location>
</feature>
<feature type="transmembrane region" description="Helical" evidence="2">
    <location>
        <begin position="55"/>
        <end position="75"/>
    </location>
</feature>
<protein>
    <recommendedName>
        <fullName>Flagellar biosynthetic protein FliQ</fullName>
    </recommendedName>
</protein>
<evidence type="ECO:0000250" key="1"/>
<evidence type="ECO:0000255" key="2"/>
<evidence type="ECO:0000305" key="3"/>
<dbReference type="EMBL" id="AE014075">
    <property type="protein sequence ID" value="AAN80825.1"/>
    <property type="molecule type" value="Genomic_DNA"/>
</dbReference>
<dbReference type="RefSeq" id="WP_000187358.1">
    <property type="nucleotide sequence ID" value="NZ_CP051263.1"/>
</dbReference>
<dbReference type="SMR" id="P0AC08"/>
<dbReference type="STRING" id="199310.c2366"/>
<dbReference type="GeneID" id="93775236"/>
<dbReference type="KEGG" id="ecc:c2366"/>
<dbReference type="eggNOG" id="COG1987">
    <property type="taxonomic scope" value="Bacteria"/>
</dbReference>
<dbReference type="HOGENOM" id="CLU_164516_2_0_6"/>
<dbReference type="BioCyc" id="ECOL199310:C2366-MONOMER"/>
<dbReference type="Proteomes" id="UP000001410">
    <property type="component" value="Chromosome"/>
</dbReference>
<dbReference type="GO" id="GO:0009425">
    <property type="term" value="C:bacterial-type flagellum basal body"/>
    <property type="evidence" value="ECO:0007669"/>
    <property type="project" value="UniProtKB-SubCell"/>
</dbReference>
<dbReference type="GO" id="GO:0005886">
    <property type="term" value="C:plasma membrane"/>
    <property type="evidence" value="ECO:0007669"/>
    <property type="project" value="UniProtKB-SubCell"/>
</dbReference>
<dbReference type="GO" id="GO:0044780">
    <property type="term" value="P:bacterial-type flagellum assembly"/>
    <property type="evidence" value="ECO:0007669"/>
    <property type="project" value="InterPro"/>
</dbReference>
<dbReference type="GO" id="GO:0009306">
    <property type="term" value="P:protein secretion"/>
    <property type="evidence" value="ECO:0007669"/>
    <property type="project" value="InterPro"/>
</dbReference>
<dbReference type="InterPro" id="IPR002191">
    <property type="entry name" value="Bac_export_3"/>
</dbReference>
<dbReference type="InterPro" id="IPR006305">
    <property type="entry name" value="FliQ"/>
</dbReference>
<dbReference type="NCBIfam" id="TIGR01402">
    <property type="entry name" value="fliQ"/>
    <property type="match status" value="1"/>
</dbReference>
<dbReference type="PANTHER" id="PTHR34040">
    <property type="entry name" value="FLAGELLAR BIOSYNTHETIC PROTEIN FLIQ"/>
    <property type="match status" value="1"/>
</dbReference>
<dbReference type="PANTHER" id="PTHR34040:SF2">
    <property type="entry name" value="FLAGELLAR BIOSYNTHETIC PROTEIN FLIQ"/>
    <property type="match status" value="1"/>
</dbReference>
<dbReference type="Pfam" id="PF01313">
    <property type="entry name" value="Bac_export_3"/>
    <property type="match status" value="1"/>
</dbReference>
<dbReference type="PIRSF" id="PIRSF004669">
    <property type="entry name" value="FliQ"/>
    <property type="match status" value="1"/>
</dbReference>
<dbReference type="PRINTS" id="PR00952">
    <property type="entry name" value="TYPE3IMQPROT"/>
</dbReference>
<reference key="1">
    <citation type="journal article" date="2002" name="Proc. Natl. Acad. Sci. U.S.A.">
        <title>Extensive mosaic structure revealed by the complete genome sequence of uropathogenic Escherichia coli.</title>
        <authorList>
            <person name="Welch R.A."/>
            <person name="Burland V."/>
            <person name="Plunkett G. III"/>
            <person name="Redford P."/>
            <person name="Roesch P."/>
            <person name="Rasko D."/>
            <person name="Buckles E.L."/>
            <person name="Liou S.-R."/>
            <person name="Boutin A."/>
            <person name="Hackett J."/>
            <person name="Stroud D."/>
            <person name="Mayhew G.F."/>
            <person name="Rose D.J."/>
            <person name="Zhou S."/>
            <person name="Schwartz D.C."/>
            <person name="Perna N.T."/>
            <person name="Mobley H.L.T."/>
            <person name="Donnenberg M.S."/>
            <person name="Blattner F.R."/>
        </authorList>
    </citation>
    <scope>NUCLEOTIDE SEQUENCE [LARGE SCALE GENOMIC DNA]</scope>
    <source>
        <strain>CFT073 / ATCC 700928 / UPEC</strain>
    </source>
</reference>
<organism>
    <name type="scientific">Escherichia coli O6:H1 (strain CFT073 / ATCC 700928 / UPEC)</name>
    <dbReference type="NCBI Taxonomy" id="199310"/>
    <lineage>
        <taxon>Bacteria</taxon>
        <taxon>Pseudomonadati</taxon>
        <taxon>Pseudomonadota</taxon>
        <taxon>Gammaproteobacteria</taxon>
        <taxon>Enterobacterales</taxon>
        <taxon>Enterobacteriaceae</taxon>
        <taxon>Escherichia</taxon>
    </lineage>
</organism>
<gene>
    <name type="primary">fliQ</name>
    <name type="ordered locus">c2366</name>
</gene>
<accession>P0AC08</accession>
<accession>P33134</accession>